<sequence>MKRISTTITTTITITTGNGAG</sequence>
<gene>
    <name evidence="1" type="primary">thrL</name>
    <name type="ordered locus">E2348C_0001</name>
</gene>
<name>LPT_ECO27</name>
<reference key="1">
    <citation type="journal article" date="2009" name="J. Bacteriol.">
        <title>Complete genome sequence and comparative genome analysis of enteropathogenic Escherichia coli O127:H6 strain E2348/69.</title>
        <authorList>
            <person name="Iguchi A."/>
            <person name="Thomson N.R."/>
            <person name="Ogura Y."/>
            <person name="Saunders D."/>
            <person name="Ooka T."/>
            <person name="Henderson I.R."/>
            <person name="Harris D."/>
            <person name="Asadulghani M."/>
            <person name="Kurokawa K."/>
            <person name="Dean P."/>
            <person name="Kenny B."/>
            <person name="Quail M.A."/>
            <person name="Thurston S."/>
            <person name="Dougan G."/>
            <person name="Hayashi T."/>
            <person name="Parkhill J."/>
            <person name="Frankel G."/>
        </authorList>
    </citation>
    <scope>NUCLEOTIDE SEQUENCE [LARGE SCALE GENOMIC DNA]</scope>
    <source>
        <strain>E2348/69 / EPEC</strain>
    </source>
</reference>
<keyword id="KW-0028">Amino-acid biosynthesis</keyword>
<keyword id="KW-0428">Leader peptide</keyword>
<keyword id="KW-1185">Reference proteome</keyword>
<keyword id="KW-0791">Threonine biosynthesis</keyword>
<feature type="peptide" id="PRO_1000188770" description="thr operon leader peptide">
    <location>
        <begin position="1"/>
        <end position="21"/>
    </location>
</feature>
<accession>B7UI46</accession>
<dbReference type="EMBL" id="FM180568">
    <property type="protein sequence ID" value="CAS07549.1"/>
    <property type="molecule type" value="Genomic_DNA"/>
</dbReference>
<dbReference type="RefSeq" id="WP_001386572.1">
    <property type="nucleotide sequence ID" value="NC_011601.1"/>
</dbReference>
<dbReference type="GeneID" id="93777441"/>
<dbReference type="KEGG" id="ecg:E2348C_0001"/>
<dbReference type="HOGENOM" id="CLU_221491_0_1_6"/>
<dbReference type="Proteomes" id="UP000008205">
    <property type="component" value="Chromosome"/>
</dbReference>
<dbReference type="GO" id="GO:0009088">
    <property type="term" value="P:threonine biosynthetic process"/>
    <property type="evidence" value="ECO:0007669"/>
    <property type="project" value="UniProtKB-UniRule"/>
</dbReference>
<dbReference type="GO" id="GO:0031556">
    <property type="term" value="P:transcriptional attenuation by ribosome"/>
    <property type="evidence" value="ECO:0007669"/>
    <property type="project" value="UniProtKB-UniRule"/>
</dbReference>
<dbReference type="HAMAP" id="MF_01907">
    <property type="entry name" value="Leader_Thr"/>
    <property type="match status" value="1"/>
</dbReference>
<dbReference type="InterPro" id="IPR011720">
    <property type="entry name" value="Thr_lead_pept"/>
</dbReference>
<dbReference type="NCBIfam" id="NF007329">
    <property type="entry name" value="PRK09816.1"/>
    <property type="match status" value="1"/>
</dbReference>
<dbReference type="NCBIfam" id="TIGR02077">
    <property type="entry name" value="thr_lead_pep"/>
    <property type="match status" value="1"/>
</dbReference>
<dbReference type="Pfam" id="PF08254">
    <property type="entry name" value="Leader_Thr"/>
    <property type="match status" value="1"/>
</dbReference>
<comment type="function">
    <text evidence="1">This protein is involved in control of the biosynthesis of threonine.</text>
</comment>
<comment type="similarity">
    <text evidence="1">Belongs to the thr operon leader peptide family.</text>
</comment>
<organism>
    <name type="scientific">Escherichia coli O127:H6 (strain E2348/69 / EPEC)</name>
    <dbReference type="NCBI Taxonomy" id="574521"/>
    <lineage>
        <taxon>Bacteria</taxon>
        <taxon>Pseudomonadati</taxon>
        <taxon>Pseudomonadota</taxon>
        <taxon>Gammaproteobacteria</taxon>
        <taxon>Enterobacterales</taxon>
        <taxon>Enterobacteriaceae</taxon>
        <taxon>Escherichia</taxon>
    </lineage>
</organism>
<evidence type="ECO:0000255" key="1">
    <source>
        <dbReference type="HAMAP-Rule" id="MF_01907"/>
    </source>
</evidence>
<proteinExistence type="inferred from homology"/>
<protein>
    <recommendedName>
        <fullName evidence="1">thr operon leader peptide</fullName>
    </recommendedName>
    <alternativeName>
        <fullName evidence="1">thr operon attenuator</fullName>
    </alternativeName>
</protein>